<evidence type="ECO:0000255" key="1">
    <source>
        <dbReference type="HAMAP-Rule" id="MF_00394"/>
    </source>
</evidence>
<name>GPDA_DEHM1</name>
<feature type="chain" id="PRO_0000255303" description="Glycerol-3-phosphate dehydrogenase [NAD(P)+]">
    <location>
        <begin position="1"/>
        <end position="359"/>
    </location>
</feature>
<feature type="active site" description="Proton acceptor" evidence="1">
    <location>
        <position position="193"/>
    </location>
</feature>
<feature type="binding site" evidence="1">
    <location>
        <position position="11"/>
    </location>
    <ligand>
        <name>NADPH</name>
        <dbReference type="ChEBI" id="CHEBI:57783"/>
    </ligand>
</feature>
<feature type="binding site" evidence="1">
    <location>
        <position position="12"/>
    </location>
    <ligand>
        <name>NADPH</name>
        <dbReference type="ChEBI" id="CHEBI:57783"/>
    </ligand>
</feature>
<feature type="binding site" evidence="1">
    <location>
        <position position="32"/>
    </location>
    <ligand>
        <name>NADPH</name>
        <dbReference type="ChEBI" id="CHEBI:57783"/>
    </ligand>
</feature>
<feature type="binding site" evidence="1">
    <location>
        <position position="107"/>
    </location>
    <ligand>
        <name>NADPH</name>
        <dbReference type="ChEBI" id="CHEBI:57783"/>
    </ligand>
</feature>
<feature type="binding site" evidence="1">
    <location>
        <position position="107"/>
    </location>
    <ligand>
        <name>sn-glycerol 3-phosphate</name>
        <dbReference type="ChEBI" id="CHEBI:57597"/>
    </ligand>
</feature>
<feature type="binding site" evidence="1">
    <location>
        <position position="138"/>
    </location>
    <ligand>
        <name>sn-glycerol 3-phosphate</name>
        <dbReference type="ChEBI" id="CHEBI:57597"/>
    </ligand>
</feature>
<feature type="binding site" evidence="1">
    <location>
        <position position="142"/>
    </location>
    <ligand>
        <name>NADPH</name>
        <dbReference type="ChEBI" id="CHEBI:57783"/>
    </ligand>
</feature>
<feature type="binding site" evidence="1">
    <location>
        <position position="193"/>
    </location>
    <ligand>
        <name>sn-glycerol 3-phosphate</name>
        <dbReference type="ChEBI" id="CHEBI:57597"/>
    </ligand>
</feature>
<feature type="binding site" evidence="1">
    <location>
        <position position="246"/>
    </location>
    <ligand>
        <name>sn-glycerol 3-phosphate</name>
        <dbReference type="ChEBI" id="CHEBI:57597"/>
    </ligand>
</feature>
<feature type="binding site" evidence="1">
    <location>
        <position position="256"/>
    </location>
    <ligand>
        <name>sn-glycerol 3-phosphate</name>
        <dbReference type="ChEBI" id="CHEBI:57597"/>
    </ligand>
</feature>
<feature type="binding site" evidence="1">
    <location>
        <position position="257"/>
    </location>
    <ligand>
        <name>NADPH</name>
        <dbReference type="ChEBI" id="CHEBI:57783"/>
    </ligand>
</feature>
<feature type="binding site" evidence="1">
    <location>
        <position position="257"/>
    </location>
    <ligand>
        <name>sn-glycerol 3-phosphate</name>
        <dbReference type="ChEBI" id="CHEBI:57597"/>
    </ligand>
</feature>
<feature type="binding site" evidence="1">
    <location>
        <position position="258"/>
    </location>
    <ligand>
        <name>sn-glycerol 3-phosphate</name>
        <dbReference type="ChEBI" id="CHEBI:57597"/>
    </ligand>
</feature>
<feature type="binding site" evidence="1">
    <location>
        <position position="281"/>
    </location>
    <ligand>
        <name>NADPH</name>
        <dbReference type="ChEBI" id="CHEBI:57783"/>
    </ligand>
</feature>
<feature type="binding site" evidence="1">
    <location>
        <position position="283"/>
    </location>
    <ligand>
        <name>NADPH</name>
        <dbReference type="ChEBI" id="CHEBI:57783"/>
    </ligand>
</feature>
<proteinExistence type="inferred from homology"/>
<protein>
    <recommendedName>
        <fullName evidence="1">Glycerol-3-phosphate dehydrogenase [NAD(P)+]</fullName>
        <ecNumber evidence="1">1.1.1.94</ecNumber>
    </recommendedName>
    <alternativeName>
        <fullName evidence="1">NAD(P)(+)-dependent glycerol-3-phosphate dehydrogenase</fullName>
    </alternativeName>
    <alternativeName>
        <fullName evidence="1">NAD(P)H-dependent dihydroxyacetone-phosphate reductase</fullName>
    </alternativeName>
</protein>
<comment type="function">
    <text evidence="1">Catalyzes the reduction of the glycolytic intermediate dihydroxyacetone phosphate (DHAP) to sn-glycerol 3-phosphate (G3P), the key precursor for phospholipid synthesis.</text>
</comment>
<comment type="catalytic activity">
    <reaction evidence="1">
        <text>sn-glycerol 3-phosphate + NAD(+) = dihydroxyacetone phosphate + NADH + H(+)</text>
        <dbReference type="Rhea" id="RHEA:11092"/>
        <dbReference type="ChEBI" id="CHEBI:15378"/>
        <dbReference type="ChEBI" id="CHEBI:57540"/>
        <dbReference type="ChEBI" id="CHEBI:57597"/>
        <dbReference type="ChEBI" id="CHEBI:57642"/>
        <dbReference type="ChEBI" id="CHEBI:57945"/>
        <dbReference type="EC" id="1.1.1.94"/>
    </reaction>
    <physiologicalReaction direction="right-to-left" evidence="1">
        <dbReference type="Rhea" id="RHEA:11094"/>
    </physiologicalReaction>
</comment>
<comment type="catalytic activity">
    <reaction evidence="1">
        <text>sn-glycerol 3-phosphate + NADP(+) = dihydroxyacetone phosphate + NADPH + H(+)</text>
        <dbReference type="Rhea" id="RHEA:11096"/>
        <dbReference type="ChEBI" id="CHEBI:15378"/>
        <dbReference type="ChEBI" id="CHEBI:57597"/>
        <dbReference type="ChEBI" id="CHEBI:57642"/>
        <dbReference type="ChEBI" id="CHEBI:57783"/>
        <dbReference type="ChEBI" id="CHEBI:58349"/>
        <dbReference type="EC" id="1.1.1.94"/>
    </reaction>
    <physiologicalReaction direction="right-to-left" evidence="1">
        <dbReference type="Rhea" id="RHEA:11098"/>
    </physiologicalReaction>
</comment>
<comment type="pathway">
    <text evidence="1">Membrane lipid metabolism; glycerophospholipid metabolism.</text>
</comment>
<comment type="subcellular location">
    <subcellularLocation>
        <location evidence="1">Cytoplasm</location>
    </subcellularLocation>
</comment>
<comment type="similarity">
    <text evidence="1">Belongs to the NAD-dependent glycerol-3-phosphate dehydrogenase family.</text>
</comment>
<gene>
    <name evidence="1" type="primary">gpsA</name>
    <name type="ordered locus">DET1397</name>
</gene>
<organism>
    <name type="scientific">Dehalococcoides mccartyi (strain ATCC BAA-2266 / KCTC 15142 / 195)</name>
    <name type="common">Dehalococcoides ethenogenes (strain 195)</name>
    <dbReference type="NCBI Taxonomy" id="243164"/>
    <lineage>
        <taxon>Bacteria</taxon>
        <taxon>Bacillati</taxon>
        <taxon>Chloroflexota</taxon>
        <taxon>Dehalococcoidia</taxon>
        <taxon>Dehalococcoidales</taxon>
        <taxon>Dehalococcoidaceae</taxon>
        <taxon>Dehalococcoides</taxon>
    </lineage>
</organism>
<sequence length="359" mass="38492">MSKVCIIGTTTWGITLGTVIAHKGREVMLWARTEDEAALLSAQRRPADFLPEDYYFPEYLNVTASLEEALSGADMVLMAVPSQRMRPNIRLAAPLLTKNMLVCSASKGLEIGTAKRMSQVIADEISPDFSQNICVLSGPNLAMEILKGLPAVTVLAADTEKTAKKAAKLVTASNFCAYTNTDIIGVELGGSLKNIIALGAGIADGLSFGNNAKSALITRGLTEISALGAALGANPLTFSGLAGLGDLIATCSSNLSRNHFVGVELTKGRSLNDIMYSMSNVAEGVSTTAVAYELARSMDLEMPVTENIYNVLYNNADPKEAARKLMAAQAAHELAGRKWDLFKMFRRRRTRKTPELNPD</sequence>
<keyword id="KW-0963">Cytoplasm</keyword>
<keyword id="KW-0444">Lipid biosynthesis</keyword>
<keyword id="KW-0443">Lipid metabolism</keyword>
<keyword id="KW-0520">NAD</keyword>
<keyword id="KW-0521">NADP</keyword>
<keyword id="KW-0547">Nucleotide-binding</keyword>
<keyword id="KW-0560">Oxidoreductase</keyword>
<keyword id="KW-0594">Phospholipid biosynthesis</keyword>
<keyword id="KW-1208">Phospholipid metabolism</keyword>
<reference key="1">
    <citation type="journal article" date="2005" name="Science">
        <title>Genome sequence of the PCE-dechlorinating bacterium Dehalococcoides ethenogenes.</title>
        <authorList>
            <person name="Seshadri R."/>
            <person name="Adrian L."/>
            <person name="Fouts D.E."/>
            <person name="Eisen J.A."/>
            <person name="Phillippy A.M."/>
            <person name="Methe B.A."/>
            <person name="Ward N.L."/>
            <person name="Nelson W.C."/>
            <person name="DeBoy R.T."/>
            <person name="Khouri H.M."/>
            <person name="Kolonay J.F."/>
            <person name="Dodson R.J."/>
            <person name="Daugherty S.C."/>
            <person name="Brinkac L.M."/>
            <person name="Sullivan S.A."/>
            <person name="Madupu R."/>
            <person name="Nelson K.E."/>
            <person name="Kang K.H."/>
            <person name="Impraim M."/>
            <person name="Tran K."/>
            <person name="Robinson J.M."/>
            <person name="Forberger H.A."/>
            <person name="Fraser C.M."/>
            <person name="Zinder S.H."/>
            <person name="Heidelberg J.F."/>
        </authorList>
    </citation>
    <scope>NUCLEOTIDE SEQUENCE [LARGE SCALE GENOMIC DNA]</scope>
    <source>
        <strain>ATCC BAA-2266 / KCTC 15142 / 195</strain>
    </source>
</reference>
<dbReference type="EC" id="1.1.1.94" evidence="1"/>
<dbReference type="EMBL" id="CP000027">
    <property type="protein sequence ID" value="AAW39353.1"/>
    <property type="molecule type" value="Genomic_DNA"/>
</dbReference>
<dbReference type="RefSeq" id="WP_010937083.1">
    <property type="nucleotide sequence ID" value="NC_002936.3"/>
</dbReference>
<dbReference type="SMR" id="Q3Z6P3"/>
<dbReference type="FunCoup" id="Q3Z6P3">
    <property type="interactions" value="281"/>
</dbReference>
<dbReference type="STRING" id="243164.DET1397"/>
<dbReference type="GeneID" id="3229312"/>
<dbReference type="KEGG" id="det:DET1397"/>
<dbReference type="PATRIC" id="fig|243164.10.peg.1324"/>
<dbReference type="eggNOG" id="COG0240">
    <property type="taxonomic scope" value="Bacteria"/>
</dbReference>
<dbReference type="HOGENOM" id="CLU_033449_0_2_0"/>
<dbReference type="InParanoid" id="Q3Z6P3"/>
<dbReference type="UniPathway" id="UPA00940"/>
<dbReference type="Proteomes" id="UP000008289">
    <property type="component" value="Chromosome"/>
</dbReference>
<dbReference type="GO" id="GO:0005829">
    <property type="term" value="C:cytosol"/>
    <property type="evidence" value="ECO:0007669"/>
    <property type="project" value="TreeGrafter"/>
</dbReference>
<dbReference type="GO" id="GO:0047952">
    <property type="term" value="F:glycerol-3-phosphate dehydrogenase [NAD(P)+] activity"/>
    <property type="evidence" value="ECO:0007669"/>
    <property type="project" value="UniProtKB-UniRule"/>
</dbReference>
<dbReference type="GO" id="GO:0051287">
    <property type="term" value="F:NAD binding"/>
    <property type="evidence" value="ECO:0007669"/>
    <property type="project" value="InterPro"/>
</dbReference>
<dbReference type="GO" id="GO:0005975">
    <property type="term" value="P:carbohydrate metabolic process"/>
    <property type="evidence" value="ECO:0007669"/>
    <property type="project" value="InterPro"/>
</dbReference>
<dbReference type="GO" id="GO:0046167">
    <property type="term" value="P:glycerol-3-phosphate biosynthetic process"/>
    <property type="evidence" value="ECO:0007669"/>
    <property type="project" value="UniProtKB-UniRule"/>
</dbReference>
<dbReference type="GO" id="GO:0046168">
    <property type="term" value="P:glycerol-3-phosphate catabolic process"/>
    <property type="evidence" value="ECO:0007669"/>
    <property type="project" value="InterPro"/>
</dbReference>
<dbReference type="GO" id="GO:0006650">
    <property type="term" value="P:glycerophospholipid metabolic process"/>
    <property type="evidence" value="ECO:0007669"/>
    <property type="project" value="UniProtKB-UniRule"/>
</dbReference>
<dbReference type="GO" id="GO:0008654">
    <property type="term" value="P:phospholipid biosynthetic process"/>
    <property type="evidence" value="ECO:0007669"/>
    <property type="project" value="UniProtKB-KW"/>
</dbReference>
<dbReference type="FunFam" id="1.10.1040.10:FF:000001">
    <property type="entry name" value="Glycerol-3-phosphate dehydrogenase [NAD(P)+]"/>
    <property type="match status" value="1"/>
</dbReference>
<dbReference type="FunFam" id="3.40.50.720:FF:000019">
    <property type="entry name" value="Glycerol-3-phosphate dehydrogenase [NAD(P)+]"/>
    <property type="match status" value="1"/>
</dbReference>
<dbReference type="Gene3D" id="1.10.1040.10">
    <property type="entry name" value="N-(1-d-carboxylethyl)-l-norvaline Dehydrogenase, domain 2"/>
    <property type="match status" value="1"/>
</dbReference>
<dbReference type="Gene3D" id="3.40.50.720">
    <property type="entry name" value="NAD(P)-binding Rossmann-like Domain"/>
    <property type="match status" value="1"/>
</dbReference>
<dbReference type="HAMAP" id="MF_00394">
    <property type="entry name" value="NAD_Glyc3P_dehydrog"/>
    <property type="match status" value="1"/>
</dbReference>
<dbReference type="InterPro" id="IPR008927">
    <property type="entry name" value="6-PGluconate_DH-like_C_sf"/>
</dbReference>
<dbReference type="InterPro" id="IPR013328">
    <property type="entry name" value="6PGD_dom2"/>
</dbReference>
<dbReference type="InterPro" id="IPR006168">
    <property type="entry name" value="G3P_DH_NAD-dep"/>
</dbReference>
<dbReference type="InterPro" id="IPR006109">
    <property type="entry name" value="G3P_DH_NAD-dep_C"/>
</dbReference>
<dbReference type="InterPro" id="IPR011128">
    <property type="entry name" value="G3P_DH_NAD-dep_N"/>
</dbReference>
<dbReference type="InterPro" id="IPR036291">
    <property type="entry name" value="NAD(P)-bd_dom_sf"/>
</dbReference>
<dbReference type="NCBIfam" id="NF000940">
    <property type="entry name" value="PRK00094.1-2"/>
    <property type="match status" value="1"/>
</dbReference>
<dbReference type="NCBIfam" id="NF000942">
    <property type="entry name" value="PRK00094.1-4"/>
    <property type="match status" value="1"/>
</dbReference>
<dbReference type="PANTHER" id="PTHR11728">
    <property type="entry name" value="GLYCEROL-3-PHOSPHATE DEHYDROGENASE"/>
    <property type="match status" value="1"/>
</dbReference>
<dbReference type="PANTHER" id="PTHR11728:SF1">
    <property type="entry name" value="GLYCEROL-3-PHOSPHATE DEHYDROGENASE [NAD(+)] 2, CHLOROPLASTIC"/>
    <property type="match status" value="1"/>
</dbReference>
<dbReference type="Pfam" id="PF07479">
    <property type="entry name" value="NAD_Gly3P_dh_C"/>
    <property type="match status" value="1"/>
</dbReference>
<dbReference type="Pfam" id="PF01210">
    <property type="entry name" value="NAD_Gly3P_dh_N"/>
    <property type="match status" value="1"/>
</dbReference>
<dbReference type="PIRSF" id="PIRSF000114">
    <property type="entry name" value="Glycerol-3-P_dh"/>
    <property type="match status" value="1"/>
</dbReference>
<dbReference type="PRINTS" id="PR00077">
    <property type="entry name" value="GPDHDRGNASE"/>
</dbReference>
<dbReference type="SUPFAM" id="SSF48179">
    <property type="entry name" value="6-phosphogluconate dehydrogenase C-terminal domain-like"/>
    <property type="match status" value="1"/>
</dbReference>
<dbReference type="SUPFAM" id="SSF51735">
    <property type="entry name" value="NAD(P)-binding Rossmann-fold domains"/>
    <property type="match status" value="1"/>
</dbReference>
<dbReference type="PROSITE" id="PS00957">
    <property type="entry name" value="NAD_G3PDH"/>
    <property type="match status" value="1"/>
</dbReference>
<accession>Q3Z6P3</accession>